<evidence type="ECO:0000250" key="1"/>
<evidence type="ECO:0000255" key="2">
    <source>
        <dbReference type="HAMAP-Rule" id="MF_00403"/>
    </source>
</evidence>
<evidence type="ECO:0000305" key="3"/>
<keyword id="KW-0488">Methylation</keyword>
<keyword id="KW-1185">Reference proteome</keyword>
<keyword id="KW-0687">Ribonucleoprotein</keyword>
<keyword id="KW-0689">Ribosomal protein</keyword>
<keyword id="KW-0694">RNA-binding</keyword>
<keyword id="KW-0699">rRNA-binding</keyword>
<keyword id="KW-0820">tRNA-binding</keyword>
<comment type="function">
    <text evidence="2">With S4 and S5 plays an important role in translational accuracy.</text>
</comment>
<comment type="function">
    <text evidence="2">Interacts with and stabilizes bases of the 16S rRNA that are involved in tRNA selection in the A site and with the mRNA backbone. Located at the interface of the 30S and 50S subunits, it traverses the body of the 30S subunit contacting proteins on the other side and probably holding the rRNA structure together. The combined cluster of proteins S8, S12 and S17 appears to hold together the shoulder and platform of the 30S subunit.</text>
</comment>
<comment type="subunit">
    <text evidence="2">Part of the 30S ribosomal subunit. Contacts proteins S8 and S17. May interact with IF1 in the 30S initiation complex.</text>
</comment>
<comment type="similarity">
    <text evidence="2">Belongs to the universal ribosomal protein uS12 family.</text>
</comment>
<reference key="1">
    <citation type="journal article" date="2010" name="PLoS ONE">
        <title>The complete genome sequence of Cupriavidus metallidurans strain CH34, a master survivalist in harsh and anthropogenic environments.</title>
        <authorList>
            <person name="Janssen P.J."/>
            <person name="Van Houdt R."/>
            <person name="Moors H."/>
            <person name="Monsieurs P."/>
            <person name="Morin N."/>
            <person name="Michaux A."/>
            <person name="Benotmane M.A."/>
            <person name="Leys N."/>
            <person name="Vallaeys T."/>
            <person name="Lapidus A."/>
            <person name="Monchy S."/>
            <person name="Medigue C."/>
            <person name="Taghavi S."/>
            <person name="McCorkle S."/>
            <person name="Dunn J."/>
            <person name="van der Lelie D."/>
            <person name="Mergeay M."/>
        </authorList>
    </citation>
    <scope>NUCLEOTIDE SEQUENCE [LARGE SCALE GENOMIC DNA]</scope>
    <source>
        <strain>ATCC 43123 / DSM 2839 / NBRC 102507 / CH34</strain>
    </source>
</reference>
<accession>Q1LI27</accession>
<gene>
    <name evidence="2" type="primary">rpsL</name>
    <name type="ordered locus">Rmet_3327</name>
</gene>
<name>RS12_CUPMC</name>
<proteinExistence type="inferred from homology"/>
<organism>
    <name type="scientific">Cupriavidus metallidurans (strain ATCC 43123 / DSM 2839 / NBRC 102507 / CH34)</name>
    <name type="common">Ralstonia metallidurans</name>
    <dbReference type="NCBI Taxonomy" id="266264"/>
    <lineage>
        <taxon>Bacteria</taxon>
        <taxon>Pseudomonadati</taxon>
        <taxon>Pseudomonadota</taxon>
        <taxon>Betaproteobacteria</taxon>
        <taxon>Burkholderiales</taxon>
        <taxon>Burkholderiaceae</taxon>
        <taxon>Cupriavidus</taxon>
    </lineage>
</organism>
<sequence length="125" mass="13940">MPTINQLVRKPRVSEVIKSKSPALENCPQRRGVCTRVYTTTPKKPNSALRKVAKVRLTNGFEVISYIGGEGHNLQEHSVVLIRGGRVKDLPGVRYHIVRGSLDLQGVKDRRQARSKYGAKRPKAA</sequence>
<protein>
    <recommendedName>
        <fullName evidence="2">Small ribosomal subunit protein uS12</fullName>
    </recommendedName>
    <alternativeName>
        <fullName evidence="3">30S ribosomal protein S12</fullName>
    </alternativeName>
</protein>
<dbReference type="EMBL" id="CP000352">
    <property type="protein sequence ID" value="ABF10199.1"/>
    <property type="molecule type" value="Genomic_DNA"/>
</dbReference>
<dbReference type="RefSeq" id="WP_008649178.1">
    <property type="nucleotide sequence ID" value="NC_007973.1"/>
</dbReference>
<dbReference type="SMR" id="Q1LI27"/>
<dbReference type="STRING" id="266264.Rmet_3327"/>
<dbReference type="GeneID" id="60826590"/>
<dbReference type="KEGG" id="rme:Rmet_3327"/>
<dbReference type="eggNOG" id="COG0048">
    <property type="taxonomic scope" value="Bacteria"/>
</dbReference>
<dbReference type="HOGENOM" id="CLU_104295_1_2_4"/>
<dbReference type="Proteomes" id="UP000002429">
    <property type="component" value="Chromosome"/>
</dbReference>
<dbReference type="GO" id="GO:0015935">
    <property type="term" value="C:small ribosomal subunit"/>
    <property type="evidence" value="ECO:0007669"/>
    <property type="project" value="InterPro"/>
</dbReference>
<dbReference type="GO" id="GO:0019843">
    <property type="term" value="F:rRNA binding"/>
    <property type="evidence" value="ECO:0007669"/>
    <property type="project" value="UniProtKB-UniRule"/>
</dbReference>
<dbReference type="GO" id="GO:0003735">
    <property type="term" value="F:structural constituent of ribosome"/>
    <property type="evidence" value="ECO:0007669"/>
    <property type="project" value="InterPro"/>
</dbReference>
<dbReference type="GO" id="GO:0000049">
    <property type="term" value="F:tRNA binding"/>
    <property type="evidence" value="ECO:0007669"/>
    <property type="project" value="UniProtKB-UniRule"/>
</dbReference>
<dbReference type="GO" id="GO:0006412">
    <property type="term" value="P:translation"/>
    <property type="evidence" value="ECO:0007669"/>
    <property type="project" value="UniProtKB-UniRule"/>
</dbReference>
<dbReference type="CDD" id="cd03368">
    <property type="entry name" value="Ribosomal_S12"/>
    <property type="match status" value="1"/>
</dbReference>
<dbReference type="FunFam" id="2.40.50.140:FF:000001">
    <property type="entry name" value="30S ribosomal protein S12"/>
    <property type="match status" value="1"/>
</dbReference>
<dbReference type="Gene3D" id="2.40.50.140">
    <property type="entry name" value="Nucleic acid-binding proteins"/>
    <property type="match status" value="1"/>
</dbReference>
<dbReference type="HAMAP" id="MF_00403_B">
    <property type="entry name" value="Ribosomal_uS12_B"/>
    <property type="match status" value="1"/>
</dbReference>
<dbReference type="InterPro" id="IPR012340">
    <property type="entry name" value="NA-bd_OB-fold"/>
</dbReference>
<dbReference type="InterPro" id="IPR006032">
    <property type="entry name" value="Ribosomal_uS12"/>
</dbReference>
<dbReference type="InterPro" id="IPR005679">
    <property type="entry name" value="Ribosomal_uS12_bac"/>
</dbReference>
<dbReference type="NCBIfam" id="TIGR00981">
    <property type="entry name" value="rpsL_bact"/>
    <property type="match status" value="1"/>
</dbReference>
<dbReference type="PANTHER" id="PTHR11652">
    <property type="entry name" value="30S RIBOSOMAL PROTEIN S12 FAMILY MEMBER"/>
    <property type="match status" value="1"/>
</dbReference>
<dbReference type="Pfam" id="PF00164">
    <property type="entry name" value="Ribosom_S12_S23"/>
    <property type="match status" value="1"/>
</dbReference>
<dbReference type="PIRSF" id="PIRSF002133">
    <property type="entry name" value="Ribosomal_S12/S23"/>
    <property type="match status" value="1"/>
</dbReference>
<dbReference type="PRINTS" id="PR01034">
    <property type="entry name" value="RIBOSOMALS12"/>
</dbReference>
<dbReference type="SUPFAM" id="SSF50249">
    <property type="entry name" value="Nucleic acid-binding proteins"/>
    <property type="match status" value="1"/>
</dbReference>
<dbReference type="PROSITE" id="PS00055">
    <property type="entry name" value="RIBOSOMAL_S12"/>
    <property type="match status" value="1"/>
</dbReference>
<feature type="chain" id="PRO_0000263577" description="Small ribosomal subunit protein uS12">
    <location>
        <begin position="1"/>
        <end position="125"/>
    </location>
</feature>
<feature type="modified residue" description="3-methylthioaspartic acid" evidence="1">
    <location>
        <position position="89"/>
    </location>
</feature>